<gene>
    <name evidence="1" type="primary">pnp</name>
    <name type="ordered locus">BT_0232</name>
</gene>
<evidence type="ECO:0000255" key="1">
    <source>
        <dbReference type="HAMAP-Rule" id="MF_01595"/>
    </source>
</evidence>
<evidence type="ECO:0000256" key="2">
    <source>
        <dbReference type="SAM" id="MobiDB-lite"/>
    </source>
</evidence>
<organism>
    <name type="scientific">Bartonella tribocorum (strain CIP 105476 / IBS 506)</name>
    <dbReference type="NCBI Taxonomy" id="382640"/>
    <lineage>
        <taxon>Bacteria</taxon>
        <taxon>Pseudomonadati</taxon>
        <taxon>Pseudomonadota</taxon>
        <taxon>Alphaproteobacteria</taxon>
        <taxon>Hyphomicrobiales</taxon>
        <taxon>Bartonellaceae</taxon>
        <taxon>Bartonella</taxon>
    </lineage>
</organism>
<comment type="function">
    <text evidence="1">Involved in mRNA degradation. Catalyzes the phosphorolysis of single-stranded polyribonucleotides processively in the 3'- to 5'-direction.</text>
</comment>
<comment type="catalytic activity">
    <reaction evidence="1">
        <text>RNA(n+1) + phosphate = RNA(n) + a ribonucleoside 5'-diphosphate</text>
        <dbReference type="Rhea" id="RHEA:22096"/>
        <dbReference type="Rhea" id="RHEA-COMP:14527"/>
        <dbReference type="Rhea" id="RHEA-COMP:17342"/>
        <dbReference type="ChEBI" id="CHEBI:43474"/>
        <dbReference type="ChEBI" id="CHEBI:57930"/>
        <dbReference type="ChEBI" id="CHEBI:140395"/>
        <dbReference type="EC" id="2.7.7.8"/>
    </reaction>
</comment>
<comment type="cofactor">
    <cofactor evidence="1">
        <name>Mg(2+)</name>
        <dbReference type="ChEBI" id="CHEBI:18420"/>
    </cofactor>
</comment>
<comment type="subcellular location">
    <subcellularLocation>
        <location evidence="1">Cytoplasm</location>
    </subcellularLocation>
</comment>
<comment type="similarity">
    <text evidence="1">Belongs to the polyribonucleotide nucleotidyltransferase family.</text>
</comment>
<name>PNP_BART1</name>
<protein>
    <recommendedName>
        <fullName evidence="1">Polyribonucleotide nucleotidyltransferase</fullName>
        <ecNumber evidence="1">2.7.7.8</ecNumber>
    </recommendedName>
    <alternativeName>
        <fullName evidence="1">Polynucleotide phosphorylase</fullName>
        <shortName evidence="1">PNPase</shortName>
    </alternativeName>
</protein>
<sequence length="731" mass="80484">MFKTHKIEIEWAGRPLTLETGKIARQADGAVIATYGETIVLATVVSAKSPKPDQDFFPLTVNYQEKSYAVGRIPGGYLKRESRPSENETLVSRLIDRPIRPLFVEGYKNDTQVIVSVIQHDLENNPDILAMIASSAALTLSGVPFMGPIAGARVGYCNGQYVLNPHMDEMPESKLDLVVAGTESAVLMVESEAQELPEDIMLGAVMFGHKGLQPVLDAIIKLAEVAAKDPRDFVPEDLSDLEKAMQEMAEQDIRKAYTITDKQERYAAIDALKTEIINKFMPETEEDCQFSTDQIATVFKQLQAKIVRGNILDTKKRIDGRNLSTVRPIQSEVSILPRTHGSALFTRGETQAIVVATLGTGEDEQYIDALTGMYKETFLLHYNFPPFSVGETGRLGSPGRREIGHGKLAWRAIHPMLPTKESFPYTIRAVSEITESNGSSSMATVCGTSLALMDAGVPLARPVAGIAMGLIKEGERFAVLSDILGDEDHLGDMDFKVAGTENGITALQMDIKIDGITEEIMKIALEQAKDGRIHILNEMAKALTSARAELSEFSPRIEVINIAVDKIRDVIGSGGKVIREIVEQTGAKINIEDDGTIKIASADAKTIEAAKRWIHSIVDEPEVGAIYQGTVVKTADFGAFINFFGSRDGLVHISQLASERVTKTTDIVKEGDKVWVKLMGFDERGKVRLSMKAVDQKTGKEMTDDKSVKEEKCMDEKKQPENKRRRKKKEE</sequence>
<reference key="1">
    <citation type="journal article" date="2007" name="Nat. Genet.">
        <title>Genomic analysis of Bartonella identifies type IV secretion systems as host adaptability factors.</title>
        <authorList>
            <person name="Saenz H.L."/>
            <person name="Engel P."/>
            <person name="Stoeckli M.C."/>
            <person name="Lanz C."/>
            <person name="Raddatz G."/>
            <person name="Vayssier-Taussat M."/>
            <person name="Birtles R."/>
            <person name="Schuster S.C."/>
            <person name="Dehio C."/>
        </authorList>
    </citation>
    <scope>NUCLEOTIDE SEQUENCE [LARGE SCALE GENOMIC DNA]</scope>
    <source>
        <strain>CIP 105476 / IBS 506</strain>
    </source>
</reference>
<dbReference type="EC" id="2.7.7.8" evidence="1"/>
<dbReference type="EMBL" id="AM260525">
    <property type="protein sequence ID" value="CAK00710.1"/>
    <property type="molecule type" value="Genomic_DNA"/>
</dbReference>
<dbReference type="RefSeq" id="WP_012230628.1">
    <property type="nucleotide sequence ID" value="NC_010161.1"/>
</dbReference>
<dbReference type="SMR" id="A9IMR9"/>
<dbReference type="KEGG" id="btr:BT_0232"/>
<dbReference type="eggNOG" id="COG1185">
    <property type="taxonomic scope" value="Bacteria"/>
</dbReference>
<dbReference type="HOGENOM" id="CLU_004217_2_2_5"/>
<dbReference type="Proteomes" id="UP000001592">
    <property type="component" value="Chromosome"/>
</dbReference>
<dbReference type="GO" id="GO:0005829">
    <property type="term" value="C:cytosol"/>
    <property type="evidence" value="ECO:0007669"/>
    <property type="project" value="TreeGrafter"/>
</dbReference>
<dbReference type="GO" id="GO:0000175">
    <property type="term" value="F:3'-5'-RNA exonuclease activity"/>
    <property type="evidence" value="ECO:0007669"/>
    <property type="project" value="TreeGrafter"/>
</dbReference>
<dbReference type="GO" id="GO:0000287">
    <property type="term" value="F:magnesium ion binding"/>
    <property type="evidence" value="ECO:0007669"/>
    <property type="project" value="UniProtKB-UniRule"/>
</dbReference>
<dbReference type="GO" id="GO:0004654">
    <property type="term" value="F:polyribonucleotide nucleotidyltransferase activity"/>
    <property type="evidence" value="ECO:0007669"/>
    <property type="project" value="UniProtKB-UniRule"/>
</dbReference>
<dbReference type="GO" id="GO:0003723">
    <property type="term" value="F:RNA binding"/>
    <property type="evidence" value="ECO:0007669"/>
    <property type="project" value="UniProtKB-UniRule"/>
</dbReference>
<dbReference type="GO" id="GO:0006402">
    <property type="term" value="P:mRNA catabolic process"/>
    <property type="evidence" value="ECO:0007669"/>
    <property type="project" value="UniProtKB-UniRule"/>
</dbReference>
<dbReference type="GO" id="GO:0006396">
    <property type="term" value="P:RNA processing"/>
    <property type="evidence" value="ECO:0007669"/>
    <property type="project" value="InterPro"/>
</dbReference>
<dbReference type="CDD" id="cd02393">
    <property type="entry name" value="KH-I_PNPase"/>
    <property type="match status" value="1"/>
</dbReference>
<dbReference type="CDD" id="cd11363">
    <property type="entry name" value="RNase_PH_PNPase_1"/>
    <property type="match status" value="1"/>
</dbReference>
<dbReference type="CDD" id="cd11364">
    <property type="entry name" value="RNase_PH_PNPase_2"/>
    <property type="match status" value="1"/>
</dbReference>
<dbReference type="CDD" id="cd04472">
    <property type="entry name" value="S1_PNPase"/>
    <property type="match status" value="1"/>
</dbReference>
<dbReference type="FunFam" id="2.40.50.140:FF:000107">
    <property type="entry name" value="Polyribonucleotide nucleotidyltransferase"/>
    <property type="match status" value="1"/>
</dbReference>
<dbReference type="FunFam" id="3.30.1370.10:FF:000001">
    <property type="entry name" value="Polyribonucleotide nucleotidyltransferase"/>
    <property type="match status" value="1"/>
</dbReference>
<dbReference type="FunFam" id="3.30.230.70:FF:000001">
    <property type="entry name" value="Polyribonucleotide nucleotidyltransferase"/>
    <property type="match status" value="1"/>
</dbReference>
<dbReference type="FunFam" id="3.30.230.70:FF:000002">
    <property type="entry name" value="Polyribonucleotide nucleotidyltransferase"/>
    <property type="match status" value="1"/>
</dbReference>
<dbReference type="Gene3D" id="3.30.230.70">
    <property type="entry name" value="GHMP Kinase, N-terminal domain"/>
    <property type="match status" value="2"/>
</dbReference>
<dbReference type="Gene3D" id="3.30.1370.10">
    <property type="entry name" value="K Homology domain, type 1"/>
    <property type="match status" value="1"/>
</dbReference>
<dbReference type="Gene3D" id="2.40.50.140">
    <property type="entry name" value="Nucleic acid-binding proteins"/>
    <property type="match status" value="1"/>
</dbReference>
<dbReference type="HAMAP" id="MF_01595">
    <property type="entry name" value="PNPase"/>
    <property type="match status" value="1"/>
</dbReference>
<dbReference type="InterPro" id="IPR001247">
    <property type="entry name" value="ExoRNase_PH_dom1"/>
</dbReference>
<dbReference type="InterPro" id="IPR015847">
    <property type="entry name" value="ExoRNase_PH_dom2"/>
</dbReference>
<dbReference type="InterPro" id="IPR036345">
    <property type="entry name" value="ExoRNase_PH_dom2_sf"/>
</dbReference>
<dbReference type="InterPro" id="IPR004087">
    <property type="entry name" value="KH_dom"/>
</dbReference>
<dbReference type="InterPro" id="IPR004088">
    <property type="entry name" value="KH_dom_type_1"/>
</dbReference>
<dbReference type="InterPro" id="IPR036612">
    <property type="entry name" value="KH_dom_type_1_sf"/>
</dbReference>
<dbReference type="InterPro" id="IPR012340">
    <property type="entry name" value="NA-bd_OB-fold"/>
</dbReference>
<dbReference type="InterPro" id="IPR012162">
    <property type="entry name" value="PNPase"/>
</dbReference>
<dbReference type="InterPro" id="IPR027408">
    <property type="entry name" value="PNPase/RNase_PH_dom_sf"/>
</dbReference>
<dbReference type="InterPro" id="IPR015848">
    <property type="entry name" value="PNPase_PH_RNA-bd_bac/org-type"/>
</dbReference>
<dbReference type="InterPro" id="IPR020568">
    <property type="entry name" value="Ribosomal_Su5_D2-typ_SF"/>
</dbReference>
<dbReference type="InterPro" id="IPR003029">
    <property type="entry name" value="S1_domain"/>
</dbReference>
<dbReference type="NCBIfam" id="TIGR03591">
    <property type="entry name" value="polynuc_phos"/>
    <property type="match status" value="1"/>
</dbReference>
<dbReference type="NCBIfam" id="NF008805">
    <property type="entry name" value="PRK11824.1"/>
    <property type="match status" value="1"/>
</dbReference>
<dbReference type="PANTHER" id="PTHR11252">
    <property type="entry name" value="POLYRIBONUCLEOTIDE NUCLEOTIDYLTRANSFERASE"/>
    <property type="match status" value="1"/>
</dbReference>
<dbReference type="PANTHER" id="PTHR11252:SF0">
    <property type="entry name" value="POLYRIBONUCLEOTIDE NUCLEOTIDYLTRANSFERASE 1, MITOCHONDRIAL"/>
    <property type="match status" value="1"/>
</dbReference>
<dbReference type="Pfam" id="PF00013">
    <property type="entry name" value="KH_1"/>
    <property type="match status" value="1"/>
</dbReference>
<dbReference type="Pfam" id="PF03726">
    <property type="entry name" value="PNPase"/>
    <property type="match status" value="1"/>
</dbReference>
<dbReference type="Pfam" id="PF01138">
    <property type="entry name" value="RNase_PH"/>
    <property type="match status" value="2"/>
</dbReference>
<dbReference type="Pfam" id="PF03725">
    <property type="entry name" value="RNase_PH_C"/>
    <property type="match status" value="2"/>
</dbReference>
<dbReference type="Pfam" id="PF00575">
    <property type="entry name" value="S1"/>
    <property type="match status" value="1"/>
</dbReference>
<dbReference type="PIRSF" id="PIRSF005499">
    <property type="entry name" value="PNPase"/>
    <property type="match status" value="1"/>
</dbReference>
<dbReference type="SMART" id="SM00322">
    <property type="entry name" value="KH"/>
    <property type="match status" value="1"/>
</dbReference>
<dbReference type="SMART" id="SM00316">
    <property type="entry name" value="S1"/>
    <property type="match status" value="1"/>
</dbReference>
<dbReference type="SUPFAM" id="SSF54791">
    <property type="entry name" value="Eukaryotic type KH-domain (KH-domain type I)"/>
    <property type="match status" value="1"/>
</dbReference>
<dbReference type="SUPFAM" id="SSF50249">
    <property type="entry name" value="Nucleic acid-binding proteins"/>
    <property type="match status" value="1"/>
</dbReference>
<dbReference type="SUPFAM" id="SSF55666">
    <property type="entry name" value="Ribonuclease PH domain 2-like"/>
    <property type="match status" value="2"/>
</dbReference>
<dbReference type="SUPFAM" id="SSF54211">
    <property type="entry name" value="Ribosomal protein S5 domain 2-like"/>
    <property type="match status" value="2"/>
</dbReference>
<dbReference type="PROSITE" id="PS50084">
    <property type="entry name" value="KH_TYPE_1"/>
    <property type="match status" value="1"/>
</dbReference>
<dbReference type="PROSITE" id="PS50126">
    <property type="entry name" value="S1"/>
    <property type="match status" value="1"/>
</dbReference>
<proteinExistence type="inferred from homology"/>
<keyword id="KW-0963">Cytoplasm</keyword>
<keyword id="KW-0460">Magnesium</keyword>
<keyword id="KW-0479">Metal-binding</keyword>
<keyword id="KW-0548">Nucleotidyltransferase</keyword>
<keyword id="KW-0694">RNA-binding</keyword>
<keyword id="KW-0808">Transferase</keyword>
<feature type="chain" id="PRO_1000087983" description="Polyribonucleotide nucleotidyltransferase">
    <location>
        <begin position="1"/>
        <end position="731"/>
    </location>
</feature>
<feature type="domain" description="KH" evidence="1">
    <location>
        <begin position="555"/>
        <end position="614"/>
    </location>
</feature>
<feature type="domain" description="S1 motif" evidence="1">
    <location>
        <begin position="624"/>
        <end position="692"/>
    </location>
</feature>
<feature type="region of interest" description="Disordered" evidence="2">
    <location>
        <begin position="693"/>
        <end position="731"/>
    </location>
</feature>
<feature type="compositionally biased region" description="Basic and acidic residues" evidence="2">
    <location>
        <begin position="694"/>
        <end position="722"/>
    </location>
</feature>
<feature type="binding site" evidence="1">
    <location>
        <position position="488"/>
    </location>
    <ligand>
        <name>Mg(2+)</name>
        <dbReference type="ChEBI" id="CHEBI:18420"/>
    </ligand>
</feature>
<feature type="binding site" evidence="1">
    <location>
        <position position="494"/>
    </location>
    <ligand>
        <name>Mg(2+)</name>
        <dbReference type="ChEBI" id="CHEBI:18420"/>
    </ligand>
</feature>
<accession>A9IMR9</accession>